<gene>
    <name evidence="1" type="primary">syd</name>
    <name type="ordered locus">Sfri_1249</name>
</gene>
<keyword id="KW-0997">Cell inner membrane</keyword>
<keyword id="KW-1003">Cell membrane</keyword>
<keyword id="KW-0472">Membrane</keyword>
<keyword id="KW-1185">Reference proteome</keyword>
<protein>
    <recommendedName>
        <fullName evidence="1">Protein Syd</fullName>
    </recommendedName>
</protein>
<name>SYDP_SHEFN</name>
<comment type="function">
    <text evidence="1">Interacts with the SecY protein in vivo. May bind preferentially to an uncomplexed state of SecY, thus functioning either as a chelating agent for excess SecY in the cell or as a regulatory factor that negatively controls the translocase function.</text>
</comment>
<comment type="subcellular location">
    <subcellularLocation>
        <location evidence="1">Cell inner membrane</location>
        <topology evidence="1">Peripheral membrane protein</topology>
        <orientation evidence="1">Cytoplasmic side</orientation>
    </subcellularLocation>
    <text evidence="1">Loosely associated with the cytoplasmic side of the inner membrane, probably via SecY.</text>
</comment>
<comment type="similarity">
    <text evidence="1">Belongs to the Syd family.</text>
</comment>
<sequence length="216" mass="24806">MSCSSALDCFIKNYLKSYQDTLSEFPRYYPLGEDSICIQGTFNADTDDTVFWQPVKRDNVADFSNVEHALNIQLHQDIHAFYGQYFSAPLPFTASFGDGELLQAWNQDDFENLQQNVIGHLIMKKKLKQPATWFIGVLGEGDEMLTVNNDDGSVWIEIPGEKQRTKLAESLTEFLESLSPMIKPPSKPVEELPHTVDHPGIWQRIKTMWDYLLRKK</sequence>
<dbReference type="EMBL" id="CP000447">
    <property type="protein sequence ID" value="ABI71102.1"/>
    <property type="molecule type" value="Genomic_DNA"/>
</dbReference>
<dbReference type="RefSeq" id="WP_011636723.1">
    <property type="nucleotide sequence ID" value="NC_008345.1"/>
</dbReference>
<dbReference type="SMR" id="Q085G3"/>
<dbReference type="STRING" id="318167.Sfri_1249"/>
<dbReference type="KEGG" id="sfr:Sfri_1249"/>
<dbReference type="eggNOG" id="ENOG502ZCMR">
    <property type="taxonomic scope" value="Bacteria"/>
</dbReference>
<dbReference type="HOGENOM" id="CLU_121866_0_0_6"/>
<dbReference type="OrthoDB" id="5599437at2"/>
<dbReference type="Proteomes" id="UP000000684">
    <property type="component" value="Chromosome"/>
</dbReference>
<dbReference type="GO" id="GO:0009898">
    <property type="term" value="C:cytoplasmic side of plasma membrane"/>
    <property type="evidence" value="ECO:0007669"/>
    <property type="project" value="InterPro"/>
</dbReference>
<dbReference type="CDD" id="cd16323">
    <property type="entry name" value="Syd"/>
    <property type="match status" value="1"/>
</dbReference>
<dbReference type="Gene3D" id="3.40.1580.20">
    <property type="entry name" value="Syd protein"/>
    <property type="match status" value="1"/>
</dbReference>
<dbReference type="HAMAP" id="MF_01104">
    <property type="entry name" value="Syd"/>
    <property type="match status" value="1"/>
</dbReference>
<dbReference type="InterPro" id="IPR037883">
    <property type="entry name" value="Knr4/Smi1-like_sf"/>
</dbReference>
<dbReference type="InterPro" id="IPR009948">
    <property type="entry name" value="Syd"/>
</dbReference>
<dbReference type="InterPro" id="IPR038228">
    <property type="entry name" value="Syd_sf"/>
</dbReference>
<dbReference type="NCBIfam" id="NF003439">
    <property type="entry name" value="PRK04968.1"/>
    <property type="match status" value="1"/>
</dbReference>
<dbReference type="Pfam" id="PF07348">
    <property type="entry name" value="Syd"/>
    <property type="match status" value="1"/>
</dbReference>
<dbReference type="SUPFAM" id="SSF160631">
    <property type="entry name" value="SMI1/KNR4-like"/>
    <property type="match status" value="1"/>
</dbReference>
<organism>
    <name type="scientific">Shewanella frigidimarina (strain NCIMB 400)</name>
    <dbReference type="NCBI Taxonomy" id="318167"/>
    <lineage>
        <taxon>Bacteria</taxon>
        <taxon>Pseudomonadati</taxon>
        <taxon>Pseudomonadota</taxon>
        <taxon>Gammaproteobacteria</taxon>
        <taxon>Alteromonadales</taxon>
        <taxon>Shewanellaceae</taxon>
        <taxon>Shewanella</taxon>
    </lineage>
</organism>
<proteinExistence type="inferred from homology"/>
<evidence type="ECO:0000255" key="1">
    <source>
        <dbReference type="HAMAP-Rule" id="MF_01104"/>
    </source>
</evidence>
<feature type="chain" id="PRO_0000298259" description="Protein Syd">
    <location>
        <begin position="1"/>
        <end position="216"/>
    </location>
</feature>
<accession>Q085G3</accession>
<reference key="1">
    <citation type="submission" date="2006-08" db="EMBL/GenBank/DDBJ databases">
        <title>Complete sequence of Shewanella frigidimarina NCIMB 400.</title>
        <authorList>
            <consortium name="US DOE Joint Genome Institute"/>
            <person name="Copeland A."/>
            <person name="Lucas S."/>
            <person name="Lapidus A."/>
            <person name="Barry K."/>
            <person name="Detter J.C."/>
            <person name="Glavina del Rio T."/>
            <person name="Hammon N."/>
            <person name="Israni S."/>
            <person name="Dalin E."/>
            <person name="Tice H."/>
            <person name="Pitluck S."/>
            <person name="Fredrickson J.K."/>
            <person name="Kolker E."/>
            <person name="McCuel L.A."/>
            <person name="DiChristina T."/>
            <person name="Nealson K.H."/>
            <person name="Newman D."/>
            <person name="Tiedje J.M."/>
            <person name="Zhou J."/>
            <person name="Romine M.F."/>
            <person name="Culley D.E."/>
            <person name="Serres M."/>
            <person name="Chertkov O."/>
            <person name="Brettin T."/>
            <person name="Bruce D."/>
            <person name="Han C."/>
            <person name="Tapia R."/>
            <person name="Gilna P."/>
            <person name="Schmutz J."/>
            <person name="Larimer F."/>
            <person name="Land M."/>
            <person name="Hauser L."/>
            <person name="Kyrpides N."/>
            <person name="Mikhailova N."/>
            <person name="Richardson P."/>
        </authorList>
    </citation>
    <scope>NUCLEOTIDE SEQUENCE [LARGE SCALE GENOMIC DNA]</scope>
    <source>
        <strain>NCIMB 400</strain>
    </source>
</reference>